<comment type="function">
    <text evidence="1">Part of a sulfur-relay system required for 2-thiolation of 5-methylaminomethyl-2-thiouridine (mnm(5)s(2)U) at tRNA wobble positions.</text>
</comment>
<comment type="subunit">
    <text evidence="1">Heterohexamer, formed by a dimer of trimers. The hexameric TusBCD complex contains 2 copies each of TusB, TusC and TusD. The TusBCD complex interacts with TusE.</text>
</comment>
<comment type="subcellular location">
    <subcellularLocation>
        <location evidence="1">Cytoplasm</location>
    </subcellularLocation>
</comment>
<comment type="similarity">
    <text evidence="1">Belongs to the DsrH/TusB family.</text>
</comment>
<sequence length="95" mass="10229">MLHTLSVSPWHADIAAMLRVMDHGDDLLLLSDGVTAAIAGGRFLEILQSAPITLYVLQDDVDARGLAGQIADSVGRVSYTDFVRLTVKHAGQLAW</sequence>
<accession>B5XN84</accession>
<protein>
    <recommendedName>
        <fullName evidence="1">Protein TusB</fullName>
    </recommendedName>
    <alternativeName>
        <fullName evidence="1">tRNA 2-thiouridine synthesizing protein B</fullName>
    </alternativeName>
</protein>
<feature type="chain" id="PRO_1000189841" description="Protein TusB">
    <location>
        <begin position="1"/>
        <end position="95"/>
    </location>
</feature>
<gene>
    <name evidence="1" type="primary">tusB</name>
    <name type="ordered locus">KPK_0389</name>
</gene>
<name>TUSB_KLEP3</name>
<proteinExistence type="inferred from homology"/>
<organism>
    <name type="scientific">Klebsiella pneumoniae (strain 342)</name>
    <dbReference type="NCBI Taxonomy" id="507522"/>
    <lineage>
        <taxon>Bacteria</taxon>
        <taxon>Pseudomonadati</taxon>
        <taxon>Pseudomonadota</taxon>
        <taxon>Gammaproteobacteria</taxon>
        <taxon>Enterobacterales</taxon>
        <taxon>Enterobacteriaceae</taxon>
        <taxon>Klebsiella/Raoultella group</taxon>
        <taxon>Klebsiella</taxon>
        <taxon>Klebsiella pneumoniae complex</taxon>
    </lineage>
</organism>
<keyword id="KW-0963">Cytoplasm</keyword>
<keyword id="KW-0819">tRNA processing</keyword>
<reference key="1">
    <citation type="journal article" date="2008" name="PLoS Genet.">
        <title>Complete genome sequence of the N2-fixing broad host range endophyte Klebsiella pneumoniae 342 and virulence predictions verified in mice.</title>
        <authorList>
            <person name="Fouts D.E."/>
            <person name="Tyler H.L."/>
            <person name="DeBoy R.T."/>
            <person name="Daugherty S."/>
            <person name="Ren Q."/>
            <person name="Badger J.H."/>
            <person name="Durkin A.S."/>
            <person name="Huot H."/>
            <person name="Shrivastava S."/>
            <person name="Kothari S."/>
            <person name="Dodson R.J."/>
            <person name="Mohamoud Y."/>
            <person name="Khouri H."/>
            <person name="Roesch L.F.W."/>
            <person name="Krogfelt K.A."/>
            <person name="Struve C."/>
            <person name="Triplett E.W."/>
            <person name="Methe B.A."/>
        </authorList>
    </citation>
    <scope>NUCLEOTIDE SEQUENCE [LARGE SCALE GENOMIC DNA]</scope>
    <source>
        <strain>342</strain>
    </source>
</reference>
<dbReference type="EMBL" id="CP000964">
    <property type="protein sequence ID" value="ACI06575.1"/>
    <property type="molecule type" value="Genomic_DNA"/>
</dbReference>
<dbReference type="SMR" id="B5XN84"/>
<dbReference type="KEGG" id="kpe:KPK_0389"/>
<dbReference type="HOGENOM" id="CLU_166087_2_1_6"/>
<dbReference type="Proteomes" id="UP000001734">
    <property type="component" value="Chromosome"/>
</dbReference>
<dbReference type="GO" id="GO:1990228">
    <property type="term" value="C:sulfurtransferase complex"/>
    <property type="evidence" value="ECO:0007669"/>
    <property type="project" value="TreeGrafter"/>
</dbReference>
<dbReference type="GO" id="GO:0002143">
    <property type="term" value="P:tRNA wobble position uridine thiolation"/>
    <property type="evidence" value="ECO:0007669"/>
    <property type="project" value="InterPro"/>
</dbReference>
<dbReference type="Gene3D" id="3.40.1260.10">
    <property type="entry name" value="DsrEFH-like"/>
    <property type="match status" value="1"/>
</dbReference>
<dbReference type="HAMAP" id="MF_01564">
    <property type="entry name" value="Thiourid_synth_B"/>
    <property type="match status" value="1"/>
</dbReference>
<dbReference type="InterPro" id="IPR027396">
    <property type="entry name" value="DsrEFH-like"/>
</dbReference>
<dbReference type="InterPro" id="IPR023526">
    <property type="entry name" value="Sulphur_relay_TusB"/>
</dbReference>
<dbReference type="InterPro" id="IPR007215">
    <property type="entry name" value="Sulphur_relay_TusB/DsrH"/>
</dbReference>
<dbReference type="NCBIfam" id="NF010035">
    <property type="entry name" value="PRK13510.1"/>
    <property type="match status" value="1"/>
</dbReference>
<dbReference type="NCBIfam" id="TIGR03011">
    <property type="entry name" value="sulf_tusB_dsrH"/>
    <property type="match status" value="1"/>
</dbReference>
<dbReference type="PANTHER" id="PTHR37526">
    <property type="entry name" value="PROTEIN TUSB"/>
    <property type="match status" value="1"/>
</dbReference>
<dbReference type="PANTHER" id="PTHR37526:SF1">
    <property type="entry name" value="PROTEIN TUSB"/>
    <property type="match status" value="1"/>
</dbReference>
<dbReference type="Pfam" id="PF04077">
    <property type="entry name" value="DsrH"/>
    <property type="match status" value="1"/>
</dbReference>
<dbReference type="SUPFAM" id="SSF75169">
    <property type="entry name" value="DsrEFH-like"/>
    <property type="match status" value="1"/>
</dbReference>
<evidence type="ECO:0000255" key="1">
    <source>
        <dbReference type="HAMAP-Rule" id="MF_01564"/>
    </source>
</evidence>